<gene>
    <name evidence="2" type="primary">infB</name>
    <name type="ordered locus">VCM66_0601</name>
</gene>
<sequence>MTQITVKALSEEIGTPVDRLLEQLADAGMNKAVADHVSEDEKQKLLAHLRKEHGDATGSEPTRLTLQRKTRSTLSVNAGGGKSKNVQVEVRKKRTYVKRSSVEDEATREAEEAAMRAAEEQAKREAEEAAQRAAEEKAKREAEEAAKREAEAKRMAEEKAKRETQAATQPRSDEEKLKQEAARKEAEALKRRQEEEARRKAEEESRRQLEKVRELAEKNGERWSADKETVGDMQENTDYHVTTSRYAREAEDEADLHEEGARRRSTKANKRKMSSRDDNQERDSRPRGGKAGRKGRINKPMSMQHGFDKTAVVAKADVVVGETIVVSELAQKMSVKATEVIKVMMKMGAMATINQVIDQETAQLVAEEMGHKVVLRKENELEEAILSDRDDKFEEVSRAPVVTIMGHVDHGKTSTLDYIRRTHVASGEAGGITQHIGAYHVETPNGMITFLDTPGHAAFTAMRARGAQATDIVVLVVAADDGVMPQTVEAIQHAKAAGVPLIVAVNKIDKDTANPDNVKTELSQYNVMPEEWGGDNMFVHISAKQGTNIDGLLEAILLQAEVLELKAVKQGMASGVVIESRLDKGRGPVATVLVQSGTLRKGDIVLCGQEYGRVRAMRDEVGNEVEEAGPSIPVEILGLSGVPAAGDEATVVRDERKAREVANYRAGKFREVKLARQQKSKLENMFSNMTAGDVAELNIVLKADVQGSVEAIADSLTKLSTDEVKVNIVGSGVGGITETDAVLAAASNAIVVGFNVRADASARRMIEAENIDLRYYSIIYQLIDEVKQAMSGMLSPEFKQEIIGLAEVRDVFKSPKLGAIAGCMVTEGVIKRNAPIRVLRDNVVIYEGELESLRRFKDDVAEVKNGYECGIGVKNYNDVRVGDQIEVFETIEIQRTID</sequence>
<evidence type="ECO:0000250" key="1"/>
<evidence type="ECO:0000255" key="2">
    <source>
        <dbReference type="HAMAP-Rule" id="MF_00100"/>
    </source>
</evidence>
<evidence type="ECO:0000256" key="3">
    <source>
        <dbReference type="SAM" id="MobiDB-lite"/>
    </source>
</evidence>
<feature type="chain" id="PRO_1000190642" description="Translation initiation factor IF-2">
    <location>
        <begin position="1"/>
        <end position="898"/>
    </location>
</feature>
<feature type="domain" description="tr-type G">
    <location>
        <begin position="397"/>
        <end position="566"/>
    </location>
</feature>
<feature type="region of interest" description="Disordered" evidence="3">
    <location>
        <begin position="51"/>
        <end position="302"/>
    </location>
</feature>
<feature type="region of interest" description="G1" evidence="1">
    <location>
        <begin position="406"/>
        <end position="413"/>
    </location>
</feature>
<feature type="region of interest" description="G2" evidence="1">
    <location>
        <begin position="431"/>
        <end position="435"/>
    </location>
</feature>
<feature type="region of interest" description="G3" evidence="1">
    <location>
        <begin position="452"/>
        <end position="455"/>
    </location>
</feature>
<feature type="region of interest" description="G4" evidence="1">
    <location>
        <begin position="506"/>
        <end position="509"/>
    </location>
</feature>
<feature type="region of interest" description="G5" evidence="1">
    <location>
        <begin position="542"/>
        <end position="544"/>
    </location>
</feature>
<feature type="compositionally biased region" description="Basic and acidic residues" evidence="3">
    <location>
        <begin position="100"/>
        <end position="164"/>
    </location>
</feature>
<feature type="compositionally biased region" description="Basic and acidic residues" evidence="3">
    <location>
        <begin position="171"/>
        <end position="230"/>
    </location>
</feature>
<feature type="compositionally biased region" description="Polar residues" evidence="3">
    <location>
        <begin position="234"/>
        <end position="245"/>
    </location>
</feature>
<feature type="compositionally biased region" description="Basic residues" evidence="3">
    <location>
        <begin position="263"/>
        <end position="273"/>
    </location>
</feature>
<feature type="compositionally biased region" description="Basic and acidic residues" evidence="3">
    <location>
        <begin position="274"/>
        <end position="286"/>
    </location>
</feature>
<feature type="compositionally biased region" description="Basic residues" evidence="3">
    <location>
        <begin position="287"/>
        <end position="297"/>
    </location>
</feature>
<feature type="binding site" evidence="2">
    <location>
        <begin position="406"/>
        <end position="413"/>
    </location>
    <ligand>
        <name>GTP</name>
        <dbReference type="ChEBI" id="CHEBI:37565"/>
    </ligand>
</feature>
<feature type="binding site" evidence="2">
    <location>
        <begin position="452"/>
        <end position="456"/>
    </location>
    <ligand>
        <name>GTP</name>
        <dbReference type="ChEBI" id="CHEBI:37565"/>
    </ligand>
</feature>
<feature type="binding site" evidence="2">
    <location>
        <begin position="506"/>
        <end position="509"/>
    </location>
    <ligand>
        <name>GTP</name>
        <dbReference type="ChEBI" id="CHEBI:37565"/>
    </ligand>
</feature>
<reference key="1">
    <citation type="journal article" date="2008" name="PLoS ONE">
        <title>A recalibrated molecular clock and independent origins for the cholera pandemic clones.</title>
        <authorList>
            <person name="Feng L."/>
            <person name="Reeves P.R."/>
            <person name="Lan R."/>
            <person name="Ren Y."/>
            <person name="Gao C."/>
            <person name="Zhou Z."/>
            <person name="Ren Y."/>
            <person name="Cheng J."/>
            <person name="Wang W."/>
            <person name="Wang J."/>
            <person name="Qian W."/>
            <person name="Li D."/>
            <person name="Wang L."/>
        </authorList>
    </citation>
    <scope>NUCLEOTIDE SEQUENCE [LARGE SCALE GENOMIC DNA]</scope>
    <source>
        <strain>M66-2</strain>
    </source>
</reference>
<protein>
    <recommendedName>
        <fullName evidence="2">Translation initiation factor IF-2</fullName>
    </recommendedName>
</protein>
<name>IF2_VIBCM</name>
<proteinExistence type="inferred from homology"/>
<organism>
    <name type="scientific">Vibrio cholerae serotype O1 (strain M66-2)</name>
    <dbReference type="NCBI Taxonomy" id="579112"/>
    <lineage>
        <taxon>Bacteria</taxon>
        <taxon>Pseudomonadati</taxon>
        <taxon>Pseudomonadota</taxon>
        <taxon>Gammaproteobacteria</taxon>
        <taxon>Vibrionales</taxon>
        <taxon>Vibrionaceae</taxon>
        <taxon>Vibrio</taxon>
    </lineage>
</organism>
<comment type="function">
    <text evidence="2">One of the essential components for the initiation of protein synthesis. Protects formylmethionyl-tRNA from spontaneous hydrolysis and promotes its binding to the 30S ribosomal subunits. Also involved in the hydrolysis of GTP during the formation of the 70S ribosomal complex.</text>
</comment>
<comment type="subcellular location">
    <subcellularLocation>
        <location evidence="2">Cytoplasm</location>
    </subcellularLocation>
</comment>
<comment type="similarity">
    <text evidence="2">Belongs to the TRAFAC class translation factor GTPase superfamily. Classic translation factor GTPase family. IF-2 subfamily.</text>
</comment>
<keyword id="KW-0963">Cytoplasm</keyword>
<keyword id="KW-0342">GTP-binding</keyword>
<keyword id="KW-0396">Initiation factor</keyword>
<keyword id="KW-0547">Nucleotide-binding</keyword>
<keyword id="KW-0648">Protein biosynthesis</keyword>
<dbReference type="EMBL" id="CP001233">
    <property type="protein sequence ID" value="ACP04924.1"/>
    <property type="molecule type" value="Genomic_DNA"/>
</dbReference>
<dbReference type="RefSeq" id="WP_000192207.1">
    <property type="nucleotide sequence ID" value="NC_012578.1"/>
</dbReference>
<dbReference type="SMR" id="C3LSP8"/>
<dbReference type="GeneID" id="69720601"/>
<dbReference type="KEGG" id="vcm:VCM66_0601"/>
<dbReference type="HOGENOM" id="CLU_006301_6_3_6"/>
<dbReference type="Proteomes" id="UP000001217">
    <property type="component" value="Chromosome I"/>
</dbReference>
<dbReference type="GO" id="GO:0005829">
    <property type="term" value="C:cytosol"/>
    <property type="evidence" value="ECO:0007669"/>
    <property type="project" value="TreeGrafter"/>
</dbReference>
<dbReference type="GO" id="GO:0005525">
    <property type="term" value="F:GTP binding"/>
    <property type="evidence" value="ECO:0007669"/>
    <property type="project" value="UniProtKB-KW"/>
</dbReference>
<dbReference type="GO" id="GO:0003924">
    <property type="term" value="F:GTPase activity"/>
    <property type="evidence" value="ECO:0007669"/>
    <property type="project" value="UniProtKB-UniRule"/>
</dbReference>
<dbReference type="GO" id="GO:0097216">
    <property type="term" value="F:guanosine tetraphosphate binding"/>
    <property type="evidence" value="ECO:0007669"/>
    <property type="project" value="UniProtKB-ARBA"/>
</dbReference>
<dbReference type="GO" id="GO:0003743">
    <property type="term" value="F:translation initiation factor activity"/>
    <property type="evidence" value="ECO:0007669"/>
    <property type="project" value="UniProtKB-UniRule"/>
</dbReference>
<dbReference type="CDD" id="cd01887">
    <property type="entry name" value="IF2_eIF5B"/>
    <property type="match status" value="1"/>
</dbReference>
<dbReference type="CDD" id="cd03702">
    <property type="entry name" value="IF2_mtIF2_II"/>
    <property type="match status" value="1"/>
</dbReference>
<dbReference type="CDD" id="cd03692">
    <property type="entry name" value="mtIF2_IVc"/>
    <property type="match status" value="1"/>
</dbReference>
<dbReference type="FunFam" id="2.40.30.10:FF:000007">
    <property type="entry name" value="Translation initiation factor IF-2"/>
    <property type="match status" value="1"/>
</dbReference>
<dbReference type="FunFam" id="2.40.30.10:FF:000008">
    <property type="entry name" value="Translation initiation factor IF-2"/>
    <property type="match status" value="1"/>
</dbReference>
<dbReference type="FunFam" id="3.40.50.10050:FF:000001">
    <property type="entry name" value="Translation initiation factor IF-2"/>
    <property type="match status" value="1"/>
</dbReference>
<dbReference type="FunFam" id="3.40.50.300:FF:000019">
    <property type="entry name" value="Translation initiation factor IF-2"/>
    <property type="match status" value="1"/>
</dbReference>
<dbReference type="Gene3D" id="3.40.50.300">
    <property type="entry name" value="P-loop containing nucleotide triphosphate hydrolases"/>
    <property type="match status" value="1"/>
</dbReference>
<dbReference type="Gene3D" id="3.30.56.50">
    <property type="entry name" value="Putative DNA-binding domain, N-terminal subdomain of bacterial translation initiation factor IF2"/>
    <property type="match status" value="1"/>
</dbReference>
<dbReference type="Gene3D" id="2.40.30.10">
    <property type="entry name" value="Translation factors"/>
    <property type="match status" value="2"/>
</dbReference>
<dbReference type="Gene3D" id="3.40.50.10050">
    <property type="entry name" value="Translation initiation factor IF- 2, domain 3"/>
    <property type="match status" value="1"/>
</dbReference>
<dbReference type="HAMAP" id="MF_00100_B">
    <property type="entry name" value="IF_2_B"/>
    <property type="match status" value="1"/>
</dbReference>
<dbReference type="InterPro" id="IPR009061">
    <property type="entry name" value="DNA-bd_dom_put_sf"/>
</dbReference>
<dbReference type="InterPro" id="IPR053905">
    <property type="entry name" value="EF-G-like_DII"/>
</dbReference>
<dbReference type="InterPro" id="IPR004161">
    <property type="entry name" value="EFTu-like_2"/>
</dbReference>
<dbReference type="InterPro" id="IPR013575">
    <property type="entry name" value="IF2_assoc_dom_bac"/>
</dbReference>
<dbReference type="InterPro" id="IPR044145">
    <property type="entry name" value="IF2_II"/>
</dbReference>
<dbReference type="InterPro" id="IPR006847">
    <property type="entry name" value="IF2_N"/>
</dbReference>
<dbReference type="InterPro" id="IPR027417">
    <property type="entry name" value="P-loop_NTPase"/>
</dbReference>
<dbReference type="InterPro" id="IPR005225">
    <property type="entry name" value="Small_GTP-bd"/>
</dbReference>
<dbReference type="InterPro" id="IPR000795">
    <property type="entry name" value="T_Tr_GTP-bd_dom"/>
</dbReference>
<dbReference type="InterPro" id="IPR000178">
    <property type="entry name" value="TF_IF2_bacterial-like"/>
</dbReference>
<dbReference type="InterPro" id="IPR015760">
    <property type="entry name" value="TIF_IF2"/>
</dbReference>
<dbReference type="InterPro" id="IPR023115">
    <property type="entry name" value="TIF_IF2_dom3"/>
</dbReference>
<dbReference type="InterPro" id="IPR036925">
    <property type="entry name" value="TIF_IF2_dom3_sf"/>
</dbReference>
<dbReference type="InterPro" id="IPR009000">
    <property type="entry name" value="Transl_B-barrel_sf"/>
</dbReference>
<dbReference type="NCBIfam" id="TIGR00487">
    <property type="entry name" value="IF-2"/>
    <property type="match status" value="1"/>
</dbReference>
<dbReference type="NCBIfam" id="TIGR00231">
    <property type="entry name" value="small_GTP"/>
    <property type="match status" value="1"/>
</dbReference>
<dbReference type="PANTHER" id="PTHR43381:SF5">
    <property type="entry name" value="TR-TYPE G DOMAIN-CONTAINING PROTEIN"/>
    <property type="match status" value="1"/>
</dbReference>
<dbReference type="PANTHER" id="PTHR43381">
    <property type="entry name" value="TRANSLATION INITIATION FACTOR IF-2-RELATED"/>
    <property type="match status" value="1"/>
</dbReference>
<dbReference type="Pfam" id="PF22042">
    <property type="entry name" value="EF-G_D2"/>
    <property type="match status" value="1"/>
</dbReference>
<dbReference type="Pfam" id="PF00009">
    <property type="entry name" value="GTP_EFTU"/>
    <property type="match status" value="1"/>
</dbReference>
<dbReference type="Pfam" id="PF03144">
    <property type="entry name" value="GTP_EFTU_D2"/>
    <property type="match status" value="1"/>
</dbReference>
<dbReference type="Pfam" id="PF11987">
    <property type="entry name" value="IF-2"/>
    <property type="match status" value="1"/>
</dbReference>
<dbReference type="Pfam" id="PF08364">
    <property type="entry name" value="IF2_assoc"/>
    <property type="match status" value="1"/>
</dbReference>
<dbReference type="Pfam" id="PF04760">
    <property type="entry name" value="IF2_N"/>
    <property type="match status" value="2"/>
</dbReference>
<dbReference type="SUPFAM" id="SSF52156">
    <property type="entry name" value="Initiation factor IF2/eIF5b, domain 3"/>
    <property type="match status" value="1"/>
</dbReference>
<dbReference type="SUPFAM" id="SSF52540">
    <property type="entry name" value="P-loop containing nucleoside triphosphate hydrolases"/>
    <property type="match status" value="1"/>
</dbReference>
<dbReference type="SUPFAM" id="SSF46955">
    <property type="entry name" value="Putative DNA-binding domain"/>
    <property type="match status" value="1"/>
</dbReference>
<dbReference type="SUPFAM" id="SSF50447">
    <property type="entry name" value="Translation proteins"/>
    <property type="match status" value="2"/>
</dbReference>
<dbReference type="PROSITE" id="PS51722">
    <property type="entry name" value="G_TR_2"/>
    <property type="match status" value="1"/>
</dbReference>
<dbReference type="PROSITE" id="PS01176">
    <property type="entry name" value="IF2"/>
    <property type="match status" value="1"/>
</dbReference>
<accession>C3LSP8</accession>